<gene>
    <name type="ordered locus">Os06g0245800</name>
    <name type="ordered locus">LOC_Os06g13660</name>
    <name type="ORF">OJ1136_C11.1</name>
    <name type="ORF">OsJ_20798</name>
</gene>
<sequence length="996" mass="108165">MEAAALLSPTATSRSPLPLLSTAPAAHRLHVLLPLSGRRRRLCLRSSPRPRGSLGCAGDCVVRSMGSSRERGVLVKTSSSSASVESATQEVGAASSGEWSGDAIRRRFLDFYAARGHKILPSSSLVPDDPTVFLTIAGMLQFKPIFLGKEPRRVPCATTSQKCIRTNDIENVGRTSRHQTFFEMLGNFSFGDYFKKEAITWAWELTTKEFGLPPERLWISVFQDDDEAFSIWHNEVGVPKERIKRLGEDDNFWTSGATGPCGPCSEIYYDFYPERGSSDADLGDDSRFIEFYNLVFMQYNKKDDGSLEPLKQKNIDTGMGLERMARILQKVPNNYETDLIFPIIEKAASMALVSYTTADDAMKTNLKIIGDHMRAVVYLISDGVIPSNIGRGYVVRRLIRRVVRTGRLIGIRGDGHGNSEGAFLPSLAEVAISLSTEIDPDVESRRKSILGELQREELRFVQTLERGEKLLDELLDEALSSAGNNGGKPCLSGKDVFLLYDTYGFPVEITAEISGERGVIVDMKGFDMEMENQRKQSQAAHNVVKLSVGNETEIVKSIPDTEFLGYDSLSATAVVKGLLVNGNSVNVVSEGSDVEIFLDRTPFYAESGGQVGDNGFLYVYGEEDAKQKAVIEINDVQKSLGNIFVHKGTIKQGSVEVGKEIDAAVDAKLRQGAKAHHTATHLLQSALKSIIGSETSQAGSLVAFDRLRFDFNFHRPLSEEELMKIESLVNQWVSSATHLETKVMDLQDAKNAGAIAMFGEKYGEQVRVVEVPGVSMELCGGTHVSNTAEIRGFKIISEQGIASGVRRIEAVAGDAFVEYVCARDNYMRCLCSSLKVKAEDVNGRVETILEELRTTRNEVSSLRSKIAVLKAASLANKATTIDNTRVVVENMGDVDADGLKSAAEYLVDTLEDPAAVILGSSPGDGKVSLVAAFSPGVVKMGIQAGKFVGGIAKLCGGGGGGKPNFAQAGGRKPENLPGALEKARDEIVAAISSKSS</sequence>
<name>SYAP_ORYSJ</name>
<keyword id="KW-0030">Aminoacyl-tRNA synthetase</keyword>
<keyword id="KW-0067">ATP-binding</keyword>
<keyword id="KW-0150">Chloroplast</keyword>
<keyword id="KW-0436">Ligase</keyword>
<keyword id="KW-0479">Metal-binding</keyword>
<keyword id="KW-0496">Mitochondrion</keyword>
<keyword id="KW-0547">Nucleotide-binding</keyword>
<keyword id="KW-0934">Plastid</keyword>
<keyword id="KW-0648">Protein biosynthesis</keyword>
<keyword id="KW-1185">Reference proteome</keyword>
<keyword id="KW-0694">RNA-binding</keyword>
<keyword id="KW-0809">Transit peptide</keyword>
<keyword id="KW-0820">tRNA-binding</keyword>
<keyword id="KW-0862">Zinc</keyword>
<organism>
    <name type="scientific">Oryza sativa subsp. japonica</name>
    <name type="common">Rice</name>
    <dbReference type="NCBI Taxonomy" id="39947"/>
    <lineage>
        <taxon>Eukaryota</taxon>
        <taxon>Viridiplantae</taxon>
        <taxon>Streptophyta</taxon>
        <taxon>Embryophyta</taxon>
        <taxon>Tracheophyta</taxon>
        <taxon>Spermatophyta</taxon>
        <taxon>Magnoliopsida</taxon>
        <taxon>Liliopsida</taxon>
        <taxon>Poales</taxon>
        <taxon>Poaceae</taxon>
        <taxon>BOP clade</taxon>
        <taxon>Oryzoideae</taxon>
        <taxon>Oryzeae</taxon>
        <taxon>Oryzinae</taxon>
        <taxon>Oryza</taxon>
        <taxon>Oryza sativa</taxon>
    </lineage>
</organism>
<feature type="transit peptide" description="Chloroplast and mitochondrion">
    <location>
        <begin position="1"/>
        <end status="unknown"/>
    </location>
</feature>
<feature type="chain" id="PRO_0000402306" description="Alanine--tRNA ligase, chloroplastic/mitochondrial">
    <location>
        <begin status="unknown"/>
        <end position="996"/>
    </location>
</feature>
<feature type="binding site" evidence="1">
    <location>
        <position position="677"/>
    </location>
    <ligand>
        <name>Zn(2+)</name>
        <dbReference type="ChEBI" id="CHEBI:29105"/>
    </ligand>
</feature>
<feature type="binding site" evidence="1">
    <location>
        <position position="681"/>
    </location>
    <ligand>
        <name>Zn(2+)</name>
        <dbReference type="ChEBI" id="CHEBI:29105"/>
    </ligand>
</feature>
<feature type="binding site" evidence="1">
    <location>
        <position position="779"/>
    </location>
    <ligand>
        <name>Zn(2+)</name>
        <dbReference type="ChEBI" id="CHEBI:29105"/>
    </ligand>
</feature>
<feature type="binding site" evidence="1">
    <location>
        <position position="783"/>
    </location>
    <ligand>
        <name>Zn(2+)</name>
        <dbReference type="ChEBI" id="CHEBI:29105"/>
    </ligand>
</feature>
<comment type="function">
    <text evidence="1">Catalyzes the attachment of alanine to tRNA(Ala) in a two-step reaction: alanine is first activated by ATP to form Ala-AMP and then transferred to the acceptor end of tRNA(Ala). Also edits incorrectly charged tRNA(Ala) via its editing domain.</text>
</comment>
<comment type="catalytic activity">
    <reaction evidence="1">
        <text>tRNA(Ala) + L-alanine + ATP = L-alanyl-tRNA(Ala) + AMP + diphosphate</text>
        <dbReference type="Rhea" id="RHEA:12540"/>
        <dbReference type="Rhea" id="RHEA-COMP:9657"/>
        <dbReference type="Rhea" id="RHEA-COMP:9923"/>
        <dbReference type="ChEBI" id="CHEBI:30616"/>
        <dbReference type="ChEBI" id="CHEBI:33019"/>
        <dbReference type="ChEBI" id="CHEBI:57972"/>
        <dbReference type="ChEBI" id="CHEBI:78442"/>
        <dbReference type="ChEBI" id="CHEBI:78497"/>
        <dbReference type="ChEBI" id="CHEBI:456215"/>
        <dbReference type="EC" id="6.1.1.7"/>
    </reaction>
</comment>
<comment type="cofactor">
    <cofactor evidence="1">
        <name>Zn(2+)</name>
        <dbReference type="ChEBI" id="CHEBI:29105"/>
    </cofactor>
    <text evidence="1">Binds 1 zinc ion per subunit.</text>
</comment>
<comment type="subunit">
    <text evidence="1">Monomer.</text>
</comment>
<comment type="subcellular location">
    <subcellularLocation>
        <location evidence="1">Plastid</location>
        <location evidence="1">Chloroplast</location>
    </subcellularLocation>
    <subcellularLocation>
        <location evidence="1">Mitochondrion</location>
    </subcellularLocation>
</comment>
<comment type="domain">
    <text evidence="1">Consists of three domains; the N-terminal catalytic domain, the editing domain and the C-terminal C-Ala domain. The editing domain removes incorrectly charged amino acids, while the C-Ala domain, along with tRNA(Ala), serves as a bridge to cooperatively bring together the editing and aminoacylation centers thus stimulating deacylation of misacylated tRNAs.</text>
</comment>
<comment type="similarity">
    <text evidence="1">Belongs to the class-II aminoacyl-tRNA synthetase family.</text>
</comment>
<comment type="sequence caution" evidence="2">
    <conflict type="erroneous gene model prediction">
        <sequence resource="EMBL-CDS" id="BAD45655"/>
    </conflict>
</comment>
<comment type="sequence caution" evidence="2">
    <conflict type="erroneous gene model prediction">
        <sequence resource="EMBL-CDS" id="BAH93419"/>
    </conflict>
</comment>
<comment type="sequence caution" evidence="2">
    <conflict type="erroneous gene model prediction">
        <sequence resource="EMBL-CDS" id="EEE65436"/>
    </conflict>
</comment>
<evidence type="ECO:0000255" key="1">
    <source>
        <dbReference type="HAMAP-Rule" id="MF_03134"/>
    </source>
</evidence>
<evidence type="ECO:0000305" key="2"/>
<reference key="1">
    <citation type="journal article" date="2005" name="Nature">
        <title>The map-based sequence of the rice genome.</title>
        <authorList>
            <consortium name="International rice genome sequencing project (IRGSP)"/>
        </authorList>
    </citation>
    <scope>NUCLEOTIDE SEQUENCE [LARGE SCALE GENOMIC DNA]</scope>
    <source>
        <strain>cv. Nipponbare</strain>
    </source>
</reference>
<reference key="2">
    <citation type="journal article" date="2008" name="Nucleic Acids Res.">
        <title>The rice annotation project database (RAP-DB): 2008 update.</title>
        <authorList>
            <consortium name="The rice annotation project (RAP)"/>
        </authorList>
    </citation>
    <scope>GENOME REANNOTATION</scope>
    <source>
        <strain>cv. Nipponbare</strain>
    </source>
</reference>
<reference key="3">
    <citation type="journal article" date="2013" name="Rice">
        <title>Improvement of the Oryza sativa Nipponbare reference genome using next generation sequence and optical map data.</title>
        <authorList>
            <person name="Kawahara Y."/>
            <person name="de la Bastide M."/>
            <person name="Hamilton J.P."/>
            <person name="Kanamori H."/>
            <person name="McCombie W.R."/>
            <person name="Ouyang S."/>
            <person name="Schwartz D.C."/>
            <person name="Tanaka T."/>
            <person name="Wu J."/>
            <person name="Zhou S."/>
            <person name="Childs K.L."/>
            <person name="Davidson R.M."/>
            <person name="Lin H."/>
            <person name="Quesada-Ocampo L."/>
            <person name="Vaillancourt B."/>
            <person name="Sakai H."/>
            <person name="Lee S.S."/>
            <person name="Kim J."/>
            <person name="Numa H."/>
            <person name="Itoh T."/>
            <person name="Buell C.R."/>
            <person name="Matsumoto T."/>
        </authorList>
    </citation>
    <scope>GENOME REANNOTATION</scope>
    <source>
        <strain>cv. Nipponbare</strain>
    </source>
</reference>
<reference key="4">
    <citation type="journal article" date="2005" name="PLoS Biol.">
        <title>The genomes of Oryza sativa: a history of duplications.</title>
        <authorList>
            <person name="Yu J."/>
            <person name="Wang J."/>
            <person name="Lin W."/>
            <person name="Li S."/>
            <person name="Li H."/>
            <person name="Zhou J."/>
            <person name="Ni P."/>
            <person name="Dong W."/>
            <person name="Hu S."/>
            <person name="Zeng C."/>
            <person name="Zhang J."/>
            <person name="Zhang Y."/>
            <person name="Li R."/>
            <person name="Xu Z."/>
            <person name="Li S."/>
            <person name="Li X."/>
            <person name="Zheng H."/>
            <person name="Cong L."/>
            <person name="Lin L."/>
            <person name="Yin J."/>
            <person name="Geng J."/>
            <person name="Li G."/>
            <person name="Shi J."/>
            <person name="Liu J."/>
            <person name="Lv H."/>
            <person name="Li J."/>
            <person name="Wang J."/>
            <person name="Deng Y."/>
            <person name="Ran L."/>
            <person name="Shi X."/>
            <person name="Wang X."/>
            <person name="Wu Q."/>
            <person name="Li C."/>
            <person name="Ren X."/>
            <person name="Wang J."/>
            <person name="Wang X."/>
            <person name="Li D."/>
            <person name="Liu D."/>
            <person name="Zhang X."/>
            <person name="Ji Z."/>
            <person name="Zhao W."/>
            <person name="Sun Y."/>
            <person name="Zhang Z."/>
            <person name="Bao J."/>
            <person name="Han Y."/>
            <person name="Dong L."/>
            <person name="Ji J."/>
            <person name="Chen P."/>
            <person name="Wu S."/>
            <person name="Liu J."/>
            <person name="Xiao Y."/>
            <person name="Bu D."/>
            <person name="Tan J."/>
            <person name="Yang L."/>
            <person name="Ye C."/>
            <person name="Zhang J."/>
            <person name="Xu J."/>
            <person name="Zhou Y."/>
            <person name="Yu Y."/>
            <person name="Zhang B."/>
            <person name="Zhuang S."/>
            <person name="Wei H."/>
            <person name="Liu B."/>
            <person name="Lei M."/>
            <person name="Yu H."/>
            <person name="Li Y."/>
            <person name="Xu H."/>
            <person name="Wei S."/>
            <person name="He X."/>
            <person name="Fang L."/>
            <person name="Zhang Z."/>
            <person name="Zhang Y."/>
            <person name="Huang X."/>
            <person name="Su Z."/>
            <person name="Tong W."/>
            <person name="Li J."/>
            <person name="Tong Z."/>
            <person name="Li S."/>
            <person name="Ye J."/>
            <person name="Wang L."/>
            <person name="Fang L."/>
            <person name="Lei T."/>
            <person name="Chen C.-S."/>
            <person name="Chen H.-C."/>
            <person name="Xu Z."/>
            <person name="Li H."/>
            <person name="Huang H."/>
            <person name="Zhang F."/>
            <person name="Xu H."/>
            <person name="Li N."/>
            <person name="Zhao C."/>
            <person name="Li S."/>
            <person name="Dong L."/>
            <person name="Huang Y."/>
            <person name="Li L."/>
            <person name="Xi Y."/>
            <person name="Qi Q."/>
            <person name="Li W."/>
            <person name="Zhang B."/>
            <person name="Hu W."/>
            <person name="Zhang Y."/>
            <person name="Tian X."/>
            <person name="Jiao Y."/>
            <person name="Liang X."/>
            <person name="Jin J."/>
            <person name="Gao L."/>
            <person name="Zheng W."/>
            <person name="Hao B."/>
            <person name="Liu S.-M."/>
            <person name="Wang W."/>
            <person name="Yuan L."/>
            <person name="Cao M."/>
            <person name="McDermott J."/>
            <person name="Samudrala R."/>
            <person name="Wang J."/>
            <person name="Wong G.K.-S."/>
            <person name="Yang H."/>
        </authorList>
    </citation>
    <scope>NUCLEOTIDE SEQUENCE [LARGE SCALE GENOMIC DNA]</scope>
    <source>
        <strain>cv. Nipponbare</strain>
    </source>
</reference>
<proteinExistence type="inferred from homology"/>
<dbReference type="EC" id="6.1.1.7" evidence="1"/>
<dbReference type="EMBL" id="AP004027">
    <property type="protein sequence ID" value="BAD45655.1"/>
    <property type="status" value="ALT_SEQ"/>
    <property type="molecule type" value="Genomic_DNA"/>
</dbReference>
<dbReference type="EMBL" id="AP008212">
    <property type="protein sequence ID" value="BAH93419.1"/>
    <property type="status" value="ALT_SEQ"/>
    <property type="molecule type" value="Genomic_DNA"/>
</dbReference>
<dbReference type="EMBL" id="AP014962">
    <property type="status" value="NOT_ANNOTATED_CDS"/>
    <property type="molecule type" value="Genomic_DNA"/>
</dbReference>
<dbReference type="EMBL" id="CM000143">
    <property type="protein sequence ID" value="EEE65436.1"/>
    <property type="status" value="ALT_SEQ"/>
    <property type="molecule type" value="Genomic_DNA"/>
</dbReference>
<dbReference type="SMR" id="B9FSH5"/>
<dbReference type="BioGRID" id="1211216">
    <property type="interactions" value="1"/>
</dbReference>
<dbReference type="FunCoup" id="B9FSH5">
    <property type="interactions" value="793"/>
</dbReference>
<dbReference type="STRING" id="39947.B9FSH5"/>
<dbReference type="PaxDb" id="39947-B9FSH5"/>
<dbReference type="GeneID" id="9266147"/>
<dbReference type="KEGG" id="dosa:Os06g0245800"/>
<dbReference type="KEGG" id="osa:9266147"/>
<dbReference type="eggNOG" id="KOG0188">
    <property type="taxonomic scope" value="Eukaryota"/>
</dbReference>
<dbReference type="InParanoid" id="B9FSH5"/>
<dbReference type="OrthoDB" id="2423964at2759"/>
<dbReference type="Proteomes" id="UP000000763">
    <property type="component" value="Chromosome 6"/>
</dbReference>
<dbReference type="Proteomes" id="UP000007752">
    <property type="component" value="Chromosome 6"/>
</dbReference>
<dbReference type="Proteomes" id="UP000059680">
    <property type="component" value="Chromosome 6"/>
</dbReference>
<dbReference type="GO" id="GO:0009507">
    <property type="term" value="C:chloroplast"/>
    <property type="evidence" value="ECO:0007669"/>
    <property type="project" value="UniProtKB-SubCell"/>
</dbReference>
<dbReference type="GO" id="GO:0005829">
    <property type="term" value="C:cytosol"/>
    <property type="evidence" value="ECO:0000318"/>
    <property type="project" value="GO_Central"/>
</dbReference>
<dbReference type="GO" id="GO:0005739">
    <property type="term" value="C:mitochondrion"/>
    <property type="evidence" value="ECO:0007669"/>
    <property type="project" value="UniProtKB-SubCell"/>
</dbReference>
<dbReference type="GO" id="GO:0004813">
    <property type="term" value="F:alanine-tRNA ligase activity"/>
    <property type="evidence" value="ECO:0000318"/>
    <property type="project" value="GO_Central"/>
</dbReference>
<dbReference type="GO" id="GO:0002161">
    <property type="term" value="F:aminoacyl-tRNA deacylase activity"/>
    <property type="evidence" value="ECO:0000318"/>
    <property type="project" value="GO_Central"/>
</dbReference>
<dbReference type="GO" id="GO:0005524">
    <property type="term" value="F:ATP binding"/>
    <property type="evidence" value="ECO:0007669"/>
    <property type="project" value="UniProtKB-UniRule"/>
</dbReference>
<dbReference type="GO" id="GO:0000049">
    <property type="term" value="F:tRNA binding"/>
    <property type="evidence" value="ECO:0007669"/>
    <property type="project" value="UniProtKB-KW"/>
</dbReference>
<dbReference type="GO" id="GO:0008270">
    <property type="term" value="F:zinc ion binding"/>
    <property type="evidence" value="ECO:0007669"/>
    <property type="project" value="UniProtKB-UniRule"/>
</dbReference>
<dbReference type="GO" id="GO:0006419">
    <property type="term" value="P:alanyl-tRNA aminoacylation"/>
    <property type="evidence" value="ECO:0000318"/>
    <property type="project" value="GO_Central"/>
</dbReference>
<dbReference type="CDD" id="cd00673">
    <property type="entry name" value="AlaRS_core"/>
    <property type="match status" value="1"/>
</dbReference>
<dbReference type="FunFam" id="3.10.310.40:FF:000001">
    <property type="entry name" value="Alanine--tRNA ligase"/>
    <property type="match status" value="1"/>
</dbReference>
<dbReference type="FunFam" id="3.30.54.20:FF:000001">
    <property type="entry name" value="Alanine--tRNA ligase"/>
    <property type="match status" value="1"/>
</dbReference>
<dbReference type="FunFam" id="3.30.930.10:FF:000004">
    <property type="entry name" value="Alanine--tRNA ligase"/>
    <property type="match status" value="1"/>
</dbReference>
<dbReference type="FunFam" id="3.30.980.10:FF:000004">
    <property type="entry name" value="Alanine--tRNA ligase, cytoplasmic"/>
    <property type="match status" value="1"/>
</dbReference>
<dbReference type="FunFam" id="2.40.30.130:FF:000007">
    <property type="entry name" value="Probable alanine--tRNA ligase, chloroplastic"/>
    <property type="match status" value="1"/>
</dbReference>
<dbReference type="Gene3D" id="2.40.30.130">
    <property type="match status" value="1"/>
</dbReference>
<dbReference type="Gene3D" id="3.10.310.40">
    <property type="match status" value="1"/>
</dbReference>
<dbReference type="Gene3D" id="3.30.54.20">
    <property type="match status" value="1"/>
</dbReference>
<dbReference type="Gene3D" id="6.10.250.550">
    <property type="match status" value="1"/>
</dbReference>
<dbReference type="Gene3D" id="3.30.930.10">
    <property type="entry name" value="Bira Bifunctional Protein, Domain 2"/>
    <property type="match status" value="1"/>
</dbReference>
<dbReference type="Gene3D" id="3.30.980.10">
    <property type="entry name" value="Threonyl-trna Synthetase, Chain A, domain 2"/>
    <property type="match status" value="1"/>
</dbReference>
<dbReference type="HAMAP" id="MF_00036_B">
    <property type="entry name" value="Ala_tRNA_synth_B"/>
    <property type="match status" value="1"/>
</dbReference>
<dbReference type="HAMAP" id="MF_03134">
    <property type="entry name" value="Ala_tRNA_synth_plantC"/>
    <property type="match status" value="1"/>
</dbReference>
<dbReference type="InterPro" id="IPR045864">
    <property type="entry name" value="aa-tRNA-synth_II/BPL/LPL"/>
</dbReference>
<dbReference type="InterPro" id="IPR002318">
    <property type="entry name" value="Ala-tRNA-lgiase_IIc"/>
</dbReference>
<dbReference type="InterPro" id="IPR018162">
    <property type="entry name" value="Ala-tRNA-ligase_IIc_anticod-bd"/>
</dbReference>
<dbReference type="InterPro" id="IPR018165">
    <property type="entry name" value="Ala-tRNA-synth_IIc_core"/>
</dbReference>
<dbReference type="InterPro" id="IPR018164">
    <property type="entry name" value="Ala-tRNA-synth_IIc_N"/>
</dbReference>
<dbReference type="InterPro" id="IPR050058">
    <property type="entry name" value="Ala-tRNA_ligase"/>
</dbReference>
<dbReference type="InterPro" id="IPR023033">
    <property type="entry name" value="Ala_tRNA_ligase_euk/bac"/>
</dbReference>
<dbReference type="InterPro" id="IPR027522">
    <property type="entry name" value="Ala_tRNA_synth_plant"/>
</dbReference>
<dbReference type="InterPro" id="IPR003156">
    <property type="entry name" value="DHHA1_dom"/>
</dbReference>
<dbReference type="InterPro" id="IPR018163">
    <property type="entry name" value="Thr/Ala-tRNA-synth_IIc_edit"/>
</dbReference>
<dbReference type="InterPro" id="IPR009000">
    <property type="entry name" value="Transl_B-barrel_sf"/>
</dbReference>
<dbReference type="InterPro" id="IPR012947">
    <property type="entry name" value="tRNA_SAD"/>
</dbReference>
<dbReference type="NCBIfam" id="TIGR00344">
    <property type="entry name" value="alaS"/>
    <property type="match status" value="1"/>
</dbReference>
<dbReference type="PANTHER" id="PTHR11777:SF9">
    <property type="entry name" value="ALANINE--TRNA LIGASE, CYTOPLASMIC"/>
    <property type="match status" value="1"/>
</dbReference>
<dbReference type="PANTHER" id="PTHR11777">
    <property type="entry name" value="ALANYL-TRNA SYNTHETASE"/>
    <property type="match status" value="1"/>
</dbReference>
<dbReference type="Pfam" id="PF02272">
    <property type="entry name" value="DHHA1"/>
    <property type="match status" value="1"/>
</dbReference>
<dbReference type="Pfam" id="PF01411">
    <property type="entry name" value="tRNA-synt_2c"/>
    <property type="match status" value="1"/>
</dbReference>
<dbReference type="Pfam" id="PF07973">
    <property type="entry name" value="tRNA_SAD"/>
    <property type="match status" value="1"/>
</dbReference>
<dbReference type="PRINTS" id="PR00980">
    <property type="entry name" value="TRNASYNTHALA"/>
</dbReference>
<dbReference type="SMART" id="SM00863">
    <property type="entry name" value="tRNA_SAD"/>
    <property type="match status" value="1"/>
</dbReference>
<dbReference type="SUPFAM" id="SSF55681">
    <property type="entry name" value="Class II aaRS and biotin synthetases"/>
    <property type="match status" value="1"/>
</dbReference>
<dbReference type="SUPFAM" id="SSF101353">
    <property type="entry name" value="Putative anticodon-binding domain of alanyl-tRNA synthetase (AlaRS)"/>
    <property type="match status" value="1"/>
</dbReference>
<dbReference type="SUPFAM" id="SSF55186">
    <property type="entry name" value="ThrRS/AlaRS common domain"/>
    <property type="match status" value="1"/>
</dbReference>
<dbReference type="SUPFAM" id="SSF50447">
    <property type="entry name" value="Translation proteins"/>
    <property type="match status" value="1"/>
</dbReference>
<dbReference type="PROSITE" id="PS50860">
    <property type="entry name" value="AA_TRNA_LIGASE_II_ALA"/>
    <property type="match status" value="1"/>
</dbReference>
<protein>
    <recommendedName>
        <fullName evidence="1">Alanine--tRNA ligase, chloroplastic/mitochondrial</fullName>
        <ecNumber evidence="1">6.1.1.7</ecNumber>
    </recommendedName>
    <alternativeName>
        <fullName evidence="1">Alanyl-tRNA synthetase</fullName>
        <shortName evidence="1">AlaRS</shortName>
    </alternativeName>
</protein>
<accession>B9FSH5</accession>
<accession>Q654W2</accession>